<proteinExistence type="evidence at protein level"/>
<accession>P60214</accession>
<accession>A0A1E1WVS8</accession>
<accession>H1ZZH0</accession>
<feature type="signal peptide" evidence="2 3">
    <location>
        <begin position="1"/>
        <end position="20"/>
    </location>
</feature>
<feature type="chain" id="PRO_0000066811" description="Beta-mammal/insect toxin To1" evidence="2">
    <location>
        <begin position="21"/>
        <end position="84"/>
    </location>
</feature>
<feature type="domain" description="LCN-type CS-alpha/beta" evidence="1">
    <location>
        <begin position="22"/>
        <end position="84"/>
    </location>
</feature>
<feature type="modified residue" description="Lysine amide" evidence="4">
    <location>
        <position position="84"/>
    </location>
</feature>
<feature type="disulfide bond" evidence="1">
    <location>
        <begin position="32"/>
        <end position="83"/>
    </location>
</feature>
<feature type="disulfide bond" evidence="1">
    <location>
        <begin position="36"/>
        <end position="58"/>
    </location>
</feature>
<feature type="disulfide bond" evidence="1">
    <location>
        <begin position="44"/>
        <end position="64"/>
    </location>
</feature>
<feature type="disulfide bond" evidence="1">
    <location>
        <begin position="48"/>
        <end position="66"/>
    </location>
</feature>
<feature type="sequence conflict" description="In Ref. 2; JAT91098." evidence="10" ref="2">
    <original>K</original>
    <variation>R</variation>
    <location>
        <position position="51"/>
    </location>
</feature>
<feature type="sequence conflict" description="In Ref. 2; JAT91098." evidence="10" ref="2">
    <original>K</original>
    <variation>P</variation>
    <location>
        <position position="74"/>
    </location>
</feature>
<feature type="sequence conflict" description="In Ref. 2; JAT91098." evidence="10" ref="2">
    <original>S</original>
    <variation>R</variation>
    <location>
        <position position="78"/>
    </location>
</feature>
<evidence type="ECO:0000255" key="1">
    <source>
        <dbReference type="PROSITE-ProRule" id="PRU01210"/>
    </source>
</evidence>
<evidence type="ECO:0000269" key="2">
    <source>
    </source>
</evidence>
<evidence type="ECO:0000269" key="3">
    <source>
    </source>
</evidence>
<evidence type="ECO:0000269" key="4">
    <source>
    </source>
</evidence>
<evidence type="ECO:0000269" key="5">
    <source>
    </source>
</evidence>
<evidence type="ECO:0000303" key="6">
    <source>
    </source>
</evidence>
<evidence type="ECO:0000303" key="7">
    <source>
    </source>
</evidence>
<evidence type="ECO:0000303" key="8">
    <source>
    </source>
</evidence>
<evidence type="ECO:0000303" key="9">
    <source>
    </source>
</evidence>
<evidence type="ECO:0000305" key="10"/>
<evidence type="ECO:0000305" key="11">
    <source>
    </source>
</evidence>
<evidence type="ECO:0000312" key="12">
    <source>
        <dbReference type="EMBL" id="JAT91098.1"/>
    </source>
</evidence>
<dbReference type="EMBL" id="HE585224">
    <property type="protein sequence ID" value="CCD31418.1"/>
    <property type="molecule type" value="mRNA"/>
</dbReference>
<dbReference type="EMBL" id="GEMQ01000091">
    <property type="protein sequence ID" value="JAT91098.1"/>
    <property type="molecule type" value="mRNA"/>
</dbReference>
<dbReference type="SMR" id="P60214"/>
<dbReference type="GO" id="GO:0005576">
    <property type="term" value="C:extracellular region"/>
    <property type="evidence" value="ECO:0007005"/>
    <property type="project" value="UniProtKB"/>
</dbReference>
<dbReference type="GO" id="GO:0019871">
    <property type="term" value="F:sodium channel inhibitor activity"/>
    <property type="evidence" value="ECO:0000314"/>
    <property type="project" value="UniProtKB"/>
</dbReference>
<dbReference type="GO" id="GO:0090729">
    <property type="term" value="F:toxin activity"/>
    <property type="evidence" value="ECO:0000314"/>
    <property type="project" value="UniProtKB"/>
</dbReference>
<dbReference type="GO" id="GO:0006952">
    <property type="term" value="P:defense response"/>
    <property type="evidence" value="ECO:0007669"/>
    <property type="project" value="InterPro"/>
</dbReference>
<dbReference type="GO" id="GO:0044493">
    <property type="term" value="P:envenomation resulting in negative regulation of voltage-gated sodium channel activity in another organism"/>
    <property type="evidence" value="ECO:0000314"/>
    <property type="project" value="UniProtKB"/>
</dbReference>
<dbReference type="CDD" id="cd23106">
    <property type="entry name" value="neurotoxins_LC_scorpion"/>
    <property type="match status" value="1"/>
</dbReference>
<dbReference type="FunFam" id="3.30.30.10:FF:000002">
    <property type="entry name" value="Alpha-like toxin BmK-M1"/>
    <property type="match status" value="1"/>
</dbReference>
<dbReference type="Gene3D" id="3.30.30.10">
    <property type="entry name" value="Knottin, scorpion toxin-like"/>
    <property type="match status" value="1"/>
</dbReference>
<dbReference type="InterPro" id="IPR044062">
    <property type="entry name" value="LCN-type_CS_alpha_beta_dom"/>
</dbReference>
<dbReference type="InterPro" id="IPR003614">
    <property type="entry name" value="Scorpion_toxin-like"/>
</dbReference>
<dbReference type="InterPro" id="IPR036574">
    <property type="entry name" value="Scorpion_toxin-like_sf"/>
</dbReference>
<dbReference type="InterPro" id="IPR018218">
    <property type="entry name" value="Scorpion_toxinL"/>
</dbReference>
<dbReference type="InterPro" id="IPR002061">
    <property type="entry name" value="Scorpion_toxinL/defensin"/>
</dbReference>
<dbReference type="Pfam" id="PF00537">
    <property type="entry name" value="Toxin_3"/>
    <property type="match status" value="1"/>
</dbReference>
<dbReference type="PRINTS" id="PR00285">
    <property type="entry name" value="SCORPNTOXIN"/>
</dbReference>
<dbReference type="SMART" id="SM00505">
    <property type="entry name" value="Knot1"/>
    <property type="match status" value="1"/>
</dbReference>
<dbReference type="SUPFAM" id="SSF57095">
    <property type="entry name" value="Scorpion toxin-like"/>
    <property type="match status" value="1"/>
</dbReference>
<dbReference type="PROSITE" id="PS51863">
    <property type="entry name" value="LCN_CSAB"/>
    <property type="match status" value="1"/>
</dbReference>
<keyword id="KW-0027">Amidation</keyword>
<keyword id="KW-0903">Direct protein sequencing</keyword>
<keyword id="KW-1015">Disulfide bond</keyword>
<keyword id="KW-0872">Ion channel impairing toxin</keyword>
<keyword id="KW-0528">Neurotoxin</keyword>
<keyword id="KW-0964">Secreted</keyword>
<keyword id="KW-0732">Signal</keyword>
<keyword id="KW-0800">Toxin</keyword>
<keyword id="KW-0738">Voltage-gated sodium channel impairing toxin</keyword>
<reference key="1">
    <citation type="journal article" date="2012" name="PLoS ONE">
        <title>Identification and phylogenetic analysis of Tityus pachyurus and Tityus obscurus novel putative Na+-channel scorpion toxins.</title>
        <authorList>
            <person name="Guerrero-Vargas J.A."/>
            <person name="Mourao C.B."/>
            <person name="Quintero-Hernandez V."/>
            <person name="Possani L.D."/>
            <person name="Schwartz E.F."/>
        </authorList>
    </citation>
    <scope>NUCLEOTIDE SEQUENCE [MRNA]</scope>
    <scope>AMIDATION AT LYS-84</scope>
    <scope>NOMENCLATURE</scope>
    <source>
        <tissue>Venom gland</tissue>
    </source>
</reference>
<reference evidence="12" key="2">
    <citation type="journal article" date="2018" name="PLoS ONE">
        <title>Proteomic endorsed transcriptomic profiles of venom glands from Tityus obscurus and T. serrulatus scorpions.</title>
        <authorList>
            <person name="de Oliveira U.C."/>
            <person name="Nishiyama M.Y. Jr."/>
            <person name="Dos Santos M.B.V."/>
            <person name="Santos-da-Silva A.P."/>
            <person name="Chalkidis H.M."/>
            <person name="Souza-Imberg A."/>
            <person name="Candido D.M."/>
            <person name="Yamanouye N."/>
            <person name="Dorce V.A.C."/>
            <person name="Junqueira-de-Azevedo I.L.M."/>
        </authorList>
    </citation>
    <scope>NUCLEOTIDE SEQUENCE [MRNA]</scope>
    <source>
        <tissue>Telson</tissue>
    </source>
</reference>
<reference key="3">
    <citation type="journal article" date="2002" name="Toxicon">
        <title>Scorpion toxins from Tityus cambridgei that affect Na(+)-channels.</title>
        <authorList>
            <person name="Batista C.V.F."/>
            <person name="Zamudio F.Z."/>
            <person name="Lucas S."/>
            <person name="Fox J.W."/>
            <person name="Frau A."/>
            <person name="Prestipino G."/>
            <person name="Possani L.D."/>
        </authorList>
    </citation>
    <scope>PROTEIN SEQUENCE OF 21-84</scope>
    <scope>FUNCTION</scope>
    <scope>SUBCELLULAR LOCATION</scope>
    <scope>MASS SPECTROMETRY</scope>
    <scope>BIOASSAY</scope>
    <source>
        <tissue>Venom</tissue>
    </source>
</reference>
<reference key="4">
    <citation type="journal article" date="2004" name="J. Chromatogr. B">
        <title>Proteomics of the venom from the Amazonian scorpion Tityus cambridgei and the role of prolines on mass spectrometry analysis of toxins.</title>
        <authorList>
            <person name="Batista C.V.F."/>
            <person name="del Pozo L."/>
            <person name="Zamudio F.Z."/>
            <person name="Contreras S."/>
            <person name="Becerril B."/>
            <person name="Wanke E."/>
            <person name="Possani L.D."/>
        </authorList>
    </citation>
    <scope>PROTEIN SEQUENCE OF 21-30</scope>
    <scope>SUBCELLULAR LOCATION</scope>
    <scope>MASS SPECTROMETRY</scope>
</reference>
<reference key="5">
    <citation type="journal article" date="2019" name="Biochim. Biophys. Acta">
        <title>Electrophysiological characterization of Tityus obscurus beta toxin 1 (To1) on Na+-channel isoforms.</title>
        <authorList>
            <person name="Tibery D.V."/>
            <person name="Campos L.A."/>
            <person name="Mourao C.B.F."/>
            <person name="Peigneur S."/>
            <person name="Carvalho A.C."/>
            <person name="Tytgat J."/>
            <person name="Schwartz E.F."/>
        </authorList>
    </citation>
    <scope>FUNCTION</scope>
    <scope>MASS SPECTROMETRY</scope>
    <source>
        <tissue>Venom</tissue>
    </source>
</reference>
<comment type="function">
    <text evidence="2 5">Beta toxin that show multiple effects. It enhances the open probability at more negative potentials of human Nav1.3/SCN3A and Nav1.6/SCN8A, of the insect channel BgNaV1 and of arachnid VdNaV1 channel (PubMed:30463697). It promotes an important shift in slow inactivation processes as a function of the prepulse voltage in human Nav1.3/SCN3A and Nav1.6/SCN8A and a small shift in Nav1.1/SCN1A, Nav1.2/SCN2A and Nav1.4/SCN4A (PubMed:30463697). Finally, it reduces the peak of sodium currents in Nav1.3/SCN3A (80% inhibition at 70 nM of toxin), Nav1.6/SCN8A (55.3%), Nav1.1/SCN1A (53.3%), Nav1.5/SCN5A (46.7%), Nav1.2/SCN2A (42.7%) and Nav1.4/SCN4A (20%) voltage-gated sodium channels (PubMed:30463697). It has also been shown to affect the sodium current permeability of rat cerebellum granular cells in a partially reversible manner (PubMed:11821128). In vivo, an intraperitoneal injection (20 ug) into mice produces excitability, respiratory problems, convulsions and death, within the first 30 minutes after injection (PubMed:11821128).</text>
</comment>
<comment type="subcellular location">
    <subcellularLocation>
        <location evidence="2 3">Secreted</location>
    </subcellularLocation>
</comment>
<comment type="tissue specificity">
    <text evidence="11">Expressed by the venom gland.</text>
</comment>
<comment type="domain">
    <text evidence="10">Has the structural arrangement of an alpha-helix connected to antiparallel beta-sheets by disulfide bonds (CS-alpha/beta).</text>
</comment>
<comment type="mass spectrometry"/>
<comment type="mass spectrometry"/>
<comment type="mass spectrometry">
    <text>Monoisotopic mass.</text>
</comment>
<comment type="miscellaneous">
    <text evidence="2 5">Negative results: does not modify the function of the Shaker B potassium channels (PubMed:11821128). Does not reduce the peak of sodium currents in Nav1.7/SCN9A, insect BgNav1 and arachnid VdNav1 (PubMed:30463697). It does not promote a shift in slow inactivation processes as a function of the prepulse voltage in human Nav1.5/SCN5A and Nav1.7/SCN9A, insect BgNav1 and arachnid VdNav1 (PubMed:30463697).</text>
</comment>
<comment type="similarity">
    <text evidence="10">Belongs to the long (4 C-C) scorpion toxin superfamily. Sodium channel inhibitor family. Beta subfamily.</text>
</comment>
<sequence>MTRFVLFISCFFLIDMIVECKKEGYLVGNDGCKYGCITRPHQYCVHECELKKGTDGYCAYWLACYCYNMPDWVKTWSSATNKCKGK</sequence>
<protein>
    <recommendedName>
        <fullName evidence="8 9">Beta-mammal/insect toxin To1</fullName>
    </recommendedName>
    <alternativeName>
        <fullName evidence="8">NaTx12.1</fullName>
    </alternativeName>
    <alternativeName>
        <fullName evidence="6 7">Toxin Tc49b</fullName>
    </alternativeName>
</protein>
<organism>
    <name type="scientific">Tityus obscurus</name>
    <name type="common">Amazonian scorpion</name>
    <name type="synonym">Tityus cambridgei</name>
    <dbReference type="NCBI Taxonomy" id="1221240"/>
    <lineage>
        <taxon>Eukaryota</taxon>
        <taxon>Metazoa</taxon>
        <taxon>Ecdysozoa</taxon>
        <taxon>Arthropoda</taxon>
        <taxon>Chelicerata</taxon>
        <taxon>Arachnida</taxon>
        <taxon>Scorpiones</taxon>
        <taxon>Buthida</taxon>
        <taxon>Buthoidea</taxon>
        <taxon>Buthidae</taxon>
        <taxon>Tityus</taxon>
    </lineage>
</organism>
<name>SCX1_TITOB</name>